<gene>
    <name evidence="1" type="primary">ilvC</name>
    <name type="ordered locus">RB9869</name>
</gene>
<comment type="function">
    <text evidence="1">Involved in the biosynthesis of branched-chain amino acids (BCAA). Catalyzes an alkyl-migration followed by a ketol-acid reduction of (S)-2-acetolactate (S2AL) to yield (R)-2,3-dihydroxy-isovalerate. In the isomerase reaction, S2AL is rearranged via a Mg-dependent methyl migration to produce 3-hydroxy-3-methyl-2-ketobutyrate (HMKB). In the reductase reaction, this 2-ketoacid undergoes a metal-dependent reduction by NADPH to yield (R)-2,3-dihydroxy-isovalerate.</text>
</comment>
<comment type="catalytic activity">
    <reaction evidence="1">
        <text>(2R)-2,3-dihydroxy-3-methylbutanoate + NADP(+) = (2S)-2-acetolactate + NADPH + H(+)</text>
        <dbReference type="Rhea" id="RHEA:22068"/>
        <dbReference type="ChEBI" id="CHEBI:15378"/>
        <dbReference type="ChEBI" id="CHEBI:49072"/>
        <dbReference type="ChEBI" id="CHEBI:57783"/>
        <dbReference type="ChEBI" id="CHEBI:58349"/>
        <dbReference type="ChEBI" id="CHEBI:58476"/>
        <dbReference type="EC" id="1.1.1.86"/>
    </reaction>
</comment>
<comment type="catalytic activity">
    <reaction evidence="1">
        <text>(2R,3R)-2,3-dihydroxy-3-methylpentanoate + NADP(+) = (S)-2-ethyl-2-hydroxy-3-oxobutanoate + NADPH + H(+)</text>
        <dbReference type="Rhea" id="RHEA:13493"/>
        <dbReference type="ChEBI" id="CHEBI:15378"/>
        <dbReference type="ChEBI" id="CHEBI:49256"/>
        <dbReference type="ChEBI" id="CHEBI:49258"/>
        <dbReference type="ChEBI" id="CHEBI:57783"/>
        <dbReference type="ChEBI" id="CHEBI:58349"/>
        <dbReference type="EC" id="1.1.1.86"/>
    </reaction>
</comment>
<comment type="cofactor">
    <cofactor evidence="1">
        <name>Mg(2+)</name>
        <dbReference type="ChEBI" id="CHEBI:18420"/>
    </cofactor>
    <text evidence="1">Binds 2 magnesium ions per subunit.</text>
</comment>
<comment type="pathway">
    <text evidence="1">Amino-acid biosynthesis; L-isoleucine biosynthesis; L-isoleucine from 2-oxobutanoate: step 2/4.</text>
</comment>
<comment type="pathway">
    <text evidence="1">Amino-acid biosynthesis; L-valine biosynthesis; L-valine from pyruvate: step 2/4.</text>
</comment>
<comment type="similarity">
    <text evidence="1">Belongs to the ketol-acid reductoisomerase family.</text>
</comment>
<dbReference type="EC" id="1.1.1.86" evidence="1"/>
<dbReference type="EMBL" id="BX294150">
    <property type="protein sequence ID" value="CAD76500.1"/>
    <property type="molecule type" value="Genomic_DNA"/>
</dbReference>
<dbReference type="RefSeq" id="NP_869114.1">
    <property type="nucleotide sequence ID" value="NC_005027.1"/>
</dbReference>
<dbReference type="RefSeq" id="WP_007339869.1">
    <property type="nucleotide sequence ID" value="NC_005027.1"/>
</dbReference>
<dbReference type="SMR" id="Q7UKY0"/>
<dbReference type="FunCoup" id="Q7UKY0">
    <property type="interactions" value="505"/>
</dbReference>
<dbReference type="STRING" id="243090.RB9869"/>
<dbReference type="EnsemblBacteria" id="CAD76500">
    <property type="protein sequence ID" value="CAD76500"/>
    <property type="gene ID" value="RB9869"/>
</dbReference>
<dbReference type="KEGG" id="rba:RB9869"/>
<dbReference type="PATRIC" id="fig|243090.15.peg.4748"/>
<dbReference type="eggNOG" id="COG0059">
    <property type="taxonomic scope" value="Bacteria"/>
</dbReference>
<dbReference type="HOGENOM" id="CLU_033821_0_1_0"/>
<dbReference type="InParanoid" id="Q7UKY0"/>
<dbReference type="OrthoDB" id="9804088at2"/>
<dbReference type="UniPathway" id="UPA00047">
    <property type="reaction ID" value="UER00056"/>
</dbReference>
<dbReference type="UniPathway" id="UPA00049">
    <property type="reaction ID" value="UER00060"/>
</dbReference>
<dbReference type="Proteomes" id="UP000001025">
    <property type="component" value="Chromosome"/>
</dbReference>
<dbReference type="GO" id="GO:0005829">
    <property type="term" value="C:cytosol"/>
    <property type="evidence" value="ECO:0000318"/>
    <property type="project" value="GO_Central"/>
</dbReference>
<dbReference type="GO" id="GO:0004455">
    <property type="term" value="F:ketol-acid reductoisomerase activity"/>
    <property type="evidence" value="ECO:0000318"/>
    <property type="project" value="GO_Central"/>
</dbReference>
<dbReference type="GO" id="GO:0000287">
    <property type="term" value="F:magnesium ion binding"/>
    <property type="evidence" value="ECO:0007669"/>
    <property type="project" value="UniProtKB-UniRule"/>
</dbReference>
<dbReference type="GO" id="GO:0050661">
    <property type="term" value="F:NADP binding"/>
    <property type="evidence" value="ECO:0007669"/>
    <property type="project" value="InterPro"/>
</dbReference>
<dbReference type="GO" id="GO:0009097">
    <property type="term" value="P:isoleucine biosynthetic process"/>
    <property type="evidence" value="ECO:0000318"/>
    <property type="project" value="GO_Central"/>
</dbReference>
<dbReference type="GO" id="GO:0009099">
    <property type="term" value="P:L-valine biosynthetic process"/>
    <property type="evidence" value="ECO:0000318"/>
    <property type="project" value="GO_Central"/>
</dbReference>
<dbReference type="FunFam" id="3.40.50.720:FF:000023">
    <property type="entry name" value="Ketol-acid reductoisomerase (NADP(+))"/>
    <property type="match status" value="1"/>
</dbReference>
<dbReference type="Gene3D" id="6.10.240.10">
    <property type="match status" value="1"/>
</dbReference>
<dbReference type="Gene3D" id="3.40.50.720">
    <property type="entry name" value="NAD(P)-binding Rossmann-like Domain"/>
    <property type="match status" value="1"/>
</dbReference>
<dbReference type="HAMAP" id="MF_00435">
    <property type="entry name" value="IlvC"/>
    <property type="match status" value="1"/>
</dbReference>
<dbReference type="InterPro" id="IPR008927">
    <property type="entry name" value="6-PGluconate_DH-like_C_sf"/>
</dbReference>
<dbReference type="InterPro" id="IPR013023">
    <property type="entry name" value="KARI"/>
</dbReference>
<dbReference type="InterPro" id="IPR000506">
    <property type="entry name" value="KARI_C"/>
</dbReference>
<dbReference type="InterPro" id="IPR013116">
    <property type="entry name" value="KARI_N"/>
</dbReference>
<dbReference type="InterPro" id="IPR014359">
    <property type="entry name" value="KARI_prok"/>
</dbReference>
<dbReference type="InterPro" id="IPR036291">
    <property type="entry name" value="NAD(P)-bd_dom_sf"/>
</dbReference>
<dbReference type="NCBIfam" id="TIGR00465">
    <property type="entry name" value="ilvC"/>
    <property type="match status" value="1"/>
</dbReference>
<dbReference type="NCBIfam" id="NF004017">
    <property type="entry name" value="PRK05479.1"/>
    <property type="match status" value="1"/>
</dbReference>
<dbReference type="NCBIfam" id="NF009940">
    <property type="entry name" value="PRK13403.1"/>
    <property type="match status" value="1"/>
</dbReference>
<dbReference type="PANTHER" id="PTHR21371">
    <property type="entry name" value="KETOL-ACID REDUCTOISOMERASE, MITOCHONDRIAL"/>
    <property type="match status" value="1"/>
</dbReference>
<dbReference type="PANTHER" id="PTHR21371:SF1">
    <property type="entry name" value="KETOL-ACID REDUCTOISOMERASE, MITOCHONDRIAL"/>
    <property type="match status" value="1"/>
</dbReference>
<dbReference type="Pfam" id="PF01450">
    <property type="entry name" value="KARI_C"/>
    <property type="match status" value="1"/>
</dbReference>
<dbReference type="Pfam" id="PF07991">
    <property type="entry name" value="KARI_N"/>
    <property type="match status" value="1"/>
</dbReference>
<dbReference type="PIRSF" id="PIRSF000116">
    <property type="entry name" value="IlvC_gammaproteo"/>
    <property type="match status" value="1"/>
</dbReference>
<dbReference type="SUPFAM" id="SSF48179">
    <property type="entry name" value="6-phosphogluconate dehydrogenase C-terminal domain-like"/>
    <property type="match status" value="1"/>
</dbReference>
<dbReference type="SUPFAM" id="SSF51735">
    <property type="entry name" value="NAD(P)-binding Rossmann-fold domains"/>
    <property type="match status" value="1"/>
</dbReference>
<dbReference type="PROSITE" id="PS51851">
    <property type="entry name" value="KARI_C"/>
    <property type="match status" value="1"/>
</dbReference>
<dbReference type="PROSITE" id="PS51850">
    <property type="entry name" value="KARI_N"/>
    <property type="match status" value="1"/>
</dbReference>
<protein>
    <recommendedName>
        <fullName evidence="1">Ketol-acid reductoisomerase (NADP(+))</fullName>
        <shortName evidence="1">KARI</shortName>
        <ecNumber evidence="1">1.1.1.86</ecNumber>
    </recommendedName>
    <alternativeName>
        <fullName evidence="1">Acetohydroxy-acid isomeroreductase</fullName>
        <shortName evidence="1">AHIR</shortName>
    </alternativeName>
    <alternativeName>
        <fullName evidence="1">Alpha-keto-beta-hydroxylacyl reductoisomerase</fullName>
    </alternativeName>
    <alternativeName>
        <fullName evidence="1">Ketol-acid reductoisomerase type 1</fullName>
    </alternativeName>
    <alternativeName>
        <fullName evidence="1">Ketol-acid reductoisomerase type I</fullName>
    </alternativeName>
</protein>
<organism>
    <name type="scientific">Rhodopirellula baltica (strain DSM 10527 / NCIMB 13988 / SH1)</name>
    <dbReference type="NCBI Taxonomy" id="243090"/>
    <lineage>
        <taxon>Bacteria</taxon>
        <taxon>Pseudomonadati</taxon>
        <taxon>Planctomycetota</taxon>
        <taxon>Planctomycetia</taxon>
        <taxon>Pirellulales</taxon>
        <taxon>Pirellulaceae</taxon>
        <taxon>Rhodopirellula</taxon>
    </lineage>
</organism>
<feature type="chain" id="PRO_0000151348" description="Ketol-acid reductoisomerase (NADP(+))">
    <location>
        <begin position="1"/>
        <end position="334"/>
    </location>
</feature>
<feature type="domain" description="KARI N-terminal Rossmann" evidence="2">
    <location>
        <begin position="3"/>
        <end position="183"/>
    </location>
</feature>
<feature type="domain" description="KARI C-terminal knotted" evidence="3">
    <location>
        <begin position="184"/>
        <end position="329"/>
    </location>
</feature>
<feature type="active site" evidence="1">
    <location>
        <position position="109"/>
    </location>
</feature>
<feature type="binding site" evidence="1">
    <location>
        <begin position="26"/>
        <end position="29"/>
    </location>
    <ligand>
        <name>NADP(+)</name>
        <dbReference type="ChEBI" id="CHEBI:58349"/>
    </ligand>
</feature>
<feature type="binding site" evidence="1">
    <location>
        <position position="49"/>
    </location>
    <ligand>
        <name>NADP(+)</name>
        <dbReference type="ChEBI" id="CHEBI:58349"/>
    </ligand>
</feature>
<feature type="binding site" evidence="1">
    <location>
        <position position="52"/>
    </location>
    <ligand>
        <name>NADP(+)</name>
        <dbReference type="ChEBI" id="CHEBI:58349"/>
    </ligand>
</feature>
<feature type="binding site" evidence="1">
    <location>
        <begin position="84"/>
        <end position="87"/>
    </location>
    <ligand>
        <name>NADP(+)</name>
        <dbReference type="ChEBI" id="CHEBI:58349"/>
    </ligand>
</feature>
<feature type="binding site" evidence="1">
    <location>
        <position position="135"/>
    </location>
    <ligand>
        <name>NADP(+)</name>
        <dbReference type="ChEBI" id="CHEBI:58349"/>
    </ligand>
</feature>
<feature type="binding site" evidence="1">
    <location>
        <position position="192"/>
    </location>
    <ligand>
        <name>Mg(2+)</name>
        <dbReference type="ChEBI" id="CHEBI:18420"/>
        <label>1</label>
    </ligand>
</feature>
<feature type="binding site" evidence="1">
    <location>
        <position position="192"/>
    </location>
    <ligand>
        <name>Mg(2+)</name>
        <dbReference type="ChEBI" id="CHEBI:18420"/>
        <label>2</label>
    </ligand>
</feature>
<feature type="binding site" evidence="1">
    <location>
        <position position="196"/>
    </location>
    <ligand>
        <name>Mg(2+)</name>
        <dbReference type="ChEBI" id="CHEBI:18420"/>
        <label>1</label>
    </ligand>
</feature>
<feature type="binding site" evidence="1">
    <location>
        <position position="228"/>
    </location>
    <ligand>
        <name>Mg(2+)</name>
        <dbReference type="ChEBI" id="CHEBI:18420"/>
        <label>2</label>
    </ligand>
</feature>
<feature type="binding site" evidence="1">
    <location>
        <position position="232"/>
    </location>
    <ligand>
        <name>Mg(2+)</name>
        <dbReference type="ChEBI" id="CHEBI:18420"/>
        <label>2</label>
    </ligand>
</feature>
<feature type="binding site" evidence="1">
    <location>
        <position position="253"/>
    </location>
    <ligand>
        <name>substrate</name>
    </ligand>
</feature>
<accession>Q7UKY0</accession>
<evidence type="ECO:0000255" key="1">
    <source>
        <dbReference type="HAMAP-Rule" id="MF_00435"/>
    </source>
</evidence>
<evidence type="ECO:0000255" key="2">
    <source>
        <dbReference type="PROSITE-ProRule" id="PRU01197"/>
    </source>
</evidence>
<evidence type="ECO:0000255" key="3">
    <source>
        <dbReference type="PROSITE-ProRule" id="PRU01198"/>
    </source>
</evidence>
<sequence>MAATIYYENDADLSHLKGKKVAILGYGSQGHAQAQNLRDSGCEVIIGQRPGSANYDLAVSHGFEPMSIAEATKAADVINVLLPDEVQADIYRDSIRDNLSEGNVLMCSHGFNIHFGQIDPPKGIDTLLVAPKGPGHLVRSEYEKGGGVPALIALGEGASETTKQIGLAYAKGIGGTRGGVIETTFAEETETDLFGEQVVLCGGVSELVKAGFDTLVEAGYQPEMAYFECMHELKLIVDLLYEGGLSYMRYSISNTAEYGDYVTGPRIITDETKAEMKKVLEEIQQGEFARKWISENRAGAPFFKATRRRERLHGVEQIGLGLRRMMNWIDEKEV</sequence>
<keyword id="KW-0028">Amino-acid biosynthesis</keyword>
<keyword id="KW-0100">Branched-chain amino acid biosynthesis</keyword>
<keyword id="KW-0460">Magnesium</keyword>
<keyword id="KW-0479">Metal-binding</keyword>
<keyword id="KW-0521">NADP</keyword>
<keyword id="KW-0560">Oxidoreductase</keyword>
<keyword id="KW-1185">Reference proteome</keyword>
<name>ILVC_RHOBA</name>
<reference key="1">
    <citation type="journal article" date="2003" name="Proc. Natl. Acad. Sci. U.S.A.">
        <title>Complete genome sequence of the marine planctomycete Pirellula sp. strain 1.</title>
        <authorList>
            <person name="Gloeckner F.O."/>
            <person name="Kube M."/>
            <person name="Bauer M."/>
            <person name="Teeling H."/>
            <person name="Lombardot T."/>
            <person name="Ludwig W."/>
            <person name="Gade D."/>
            <person name="Beck A."/>
            <person name="Borzym K."/>
            <person name="Heitmann K."/>
            <person name="Rabus R."/>
            <person name="Schlesner H."/>
            <person name="Amann R."/>
            <person name="Reinhardt R."/>
        </authorList>
    </citation>
    <scope>NUCLEOTIDE SEQUENCE [LARGE SCALE GENOMIC DNA]</scope>
    <source>
        <strain>DSM 10527 / NCIMB 13988 / SH1</strain>
    </source>
</reference>
<proteinExistence type="inferred from homology"/>